<feature type="chain" id="PRO_1000070420" description="Cysteine desulfurase">
    <location>
        <begin position="1"/>
        <end position="406"/>
    </location>
</feature>
<feature type="active site" description="Cysteine persulfide intermediate" evidence="1">
    <location>
        <position position="364"/>
    </location>
</feature>
<feature type="modified residue" description="N6-(pyridoxal phosphate)lysine" evidence="1">
    <location>
        <position position="226"/>
    </location>
</feature>
<dbReference type="EC" id="2.8.1.7" evidence="1"/>
<dbReference type="EC" id="4.4.1.16" evidence="1"/>
<dbReference type="EMBL" id="CP000800">
    <property type="protein sequence ID" value="ABV19944.1"/>
    <property type="molecule type" value="Genomic_DNA"/>
</dbReference>
<dbReference type="RefSeq" id="WP_000144605.1">
    <property type="nucleotide sequence ID" value="NC_009801.1"/>
</dbReference>
<dbReference type="SMR" id="A7ZME5"/>
<dbReference type="KEGG" id="ecw:EcE24377A_1896"/>
<dbReference type="HOGENOM" id="CLU_003433_2_5_6"/>
<dbReference type="UniPathway" id="UPA00266"/>
<dbReference type="Proteomes" id="UP000001122">
    <property type="component" value="Chromosome"/>
</dbReference>
<dbReference type="GO" id="GO:0005737">
    <property type="term" value="C:cytoplasm"/>
    <property type="evidence" value="ECO:0007669"/>
    <property type="project" value="UniProtKB-SubCell"/>
</dbReference>
<dbReference type="GO" id="GO:0031071">
    <property type="term" value="F:cysteine desulfurase activity"/>
    <property type="evidence" value="ECO:0007669"/>
    <property type="project" value="UniProtKB-UniRule"/>
</dbReference>
<dbReference type="GO" id="GO:0030170">
    <property type="term" value="F:pyridoxal phosphate binding"/>
    <property type="evidence" value="ECO:0007669"/>
    <property type="project" value="InterPro"/>
</dbReference>
<dbReference type="GO" id="GO:0009000">
    <property type="term" value="F:selenocysteine lyase activity"/>
    <property type="evidence" value="ECO:0007669"/>
    <property type="project" value="UniProtKB-UniRule"/>
</dbReference>
<dbReference type="GO" id="GO:0006534">
    <property type="term" value="P:cysteine metabolic process"/>
    <property type="evidence" value="ECO:0007669"/>
    <property type="project" value="InterPro"/>
</dbReference>
<dbReference type="CDD" id="cd06453">
    <property type="entry name" value="SufS_like"/>
    <property type="match status" value="1"/>
</dbReference>
<dbReference type="FunFam" id="3.40.640.10:FF:000042">
    <property type="entry name" value="Cysteine desulfurase"/>
    <property type="match status" value="1"/>
</dbReference>
<dbReference type="Gene3D" id="3.90.1150.10">
    <property type="entry name" value="Aspartate Aminotransferase, domain 1"/>
    <property type="match status" value="1"/>
</dbReference>
<dbReference type="Gene3D" id="3.40.640.10">
    <property type="entry name" value="Type I PLP-dependent aspartate aminotransferase-like (Major domain)"/>
    <property type="match status" value="1"/>
</dbReference>
<dbReference type="HAMAP" id="MF_01831">
    <property type="entry name" value="SufS_aminotrans_5"/>
    <property type="match status" value="1"/>
</dbReference>
<dbReference type="InterPro" id="IPR000192">
    <property type="entry name" value="Aminotrans_V_dom"/>
</dbReference>
<dbReference type="InterPro" id="IPR020578">
    <property type="entry name" value="Aminotrans_V_PyrdxlP_BS"/>
</dbReference>
<dbReference type="InterPro" id="IPR010970">
    <property type="entry name" value="Cys_dSase_SufS"/>
</dbReference>
<dbReference type="InterPro" id="IPR015424">
    <property type="entry name" value="PyrdxlP-dep_Trfase"/>
</dbReference>
<dbReference type="InterPro" id="IPR015421">
    <property type="entry name" value="PyrdxlP-dep_Trfase_major"/>
</dbReference>
<dbReference type="InterPro" id="IPR015422">
    <property type="entry name" value="PyrdxlP-dep_Trfase_small"/>
</dbReference>
<dbReference type="NCBIfam" id="NF006791">
    <property type="entry name" value="PRK09295.1"/>
    <property type="match status" value="1"/>
</dbReference>
<dbReference type="NCBIfam" id="TIGR01979">
    <property type="entry name" value="sufS"/>
    <property type="match status" value="1"/>
</dbReference>
<dbReference type="PANTHER" id="PTHR43586">
    <property type="entry name" value="CYSTEINE DESULFURASE"/>
    <property type="match status" value="1"/>
</dbReference>
<dbReference type="PANTHER" id="PTHR43586:SF25">
    <property type="entry name" value="CYSTEINE DESULFURASE"/>
    <property type="match status" value="1"/>
</dbReference>
<dbReference type="Pfam" id="PF00266">
    <property type="entry name" value="Aminotran_5"/>
    <property type="match status" value="1"/>
</dbReference>
<dbReference type="SUPFAM" id="SSF53383">
    <property type="entry name" value="PLP-dependent transferases"/>
    <property type="match status" value="1"/>
</dbReference>
<dbReference type="PROSITE" id="PS00595">
    <property type="entry name" value="AA_TRANSFER_CLASS_5"/>
    <property type="match status" value="1"/>
</dbReference>
<reference key="1">
    <citation type="journal article" date="2008" name="J. Bacteriol.">
        <title>The pangenome structure of Escherichia coli: comparative genomic analysis of E. coli commensal and pathogenic isolates.</title>
        <authorList>
            <person name="Rasko D.A."/>
            <person name="Rosovitz M.J."/>
            <person name="Myers G.S.A."/>
            <person name="Mongodin E.F."/>
            <person name="Fricke W.F."/>
            <person name="Gajer P."/>
            <person name="Crabtree J."/>
            <person name="Sebaihia M."/>
            <person name="Thomson N.R."/>
            <person name="Chaudhuri R."/>
            <person name="Henderson I.R."/>
            <person name="Sperandio V."/>
            <person name="Ravel J."/>
        </authorList>
    </citation>
    <scope>NUCLEOTIDE SEQUENCE [LARGE SCALE GENOMIC DNA]</scope>
    <source>
        <strain>E24377A / ETEC</strain>
    </source>
</reference>
<sequence>MTFSVDKVRADFPVLSREVNGLPLAYLDSAASAQKPSQVIDSEAEFYRHGYAAVHRGIHTLSAQATEKMENVRKRASLFINARSAEELVFVRGTTEGINLVANSWGNSNVRAGDNIIISQMEHHANIVPWQMLCARVGAELRVIPLNPDGTLQLETLPTLFDEKTRLLAITHVSNVLGTENPLAEMITLAHQHGAKVLVDGAQAVMHHPVHVQALDCDFYVFSGHKLYGPTGIGILYVKEALLQEMPPWEGGGSMIATVSLSEGTTWTKAPWRFEAGTPNTGGIIGLGAALEYVSALGLNSIAEYEQNLMHYALSQLESVPDLTLYGPQNRLGVIAFNLGKHHAYDVGSFLDNYGIAVRTGHHCAMPLMAYYNVPAMCRASLAMYNTHEEVDRLVTGLQRIHRLLG</sequence>
<comment type="function">
    <text evidence="1">Cysteine desulfurases mobilize the sulfur from L-cysteine to yield L-alanine, an essential step in sulfur metabolism for biosynthesis of a variety of sulfur-containing biomolecules. Component of the suf operon, which is activated and required under specific conditions such as oxidative stress and iron limitation. Acts as a potent selenocysteine lyase in vitro, that mobilizes selenium from L-selenocysteine. Selenocysteine lyase activity is however unsure in vivo.</text>
</comment>
<comment type="catalytic activity">
    <reaction evidence="1">
        <text>(sulfur carrier)-H + L-cysteine = (sulfur carrier)-SH + L-alanine</text>
        <dbReference type="Rhea" id="RHEA:43892"/>
        <dbReference type="Rhea" id="RHEA-COMP:14737"/>
        <dbReference type="Rhea" id="RHEA-COMP:14739"/>
        <dbReference type="ChEBI" id="CHEBI:29917"/>
        <dbReference type="ChEBI" id="CHEBI:35235"/>
        <dbReference type="ChEBI" id="CHEBI:57972"/>
        <dbReference type="ChEBI" id="CHEBI:64428"/>
        <dbReference type="EC" id="2.8.1.7"/>
    </reaction>
</comment>
<comment type="catalytic activity">
    <reaction evidence="1">
        <text>L-selenocysteine + AH2 = hydrogenselenide + L-alanine + A + H(+)</text>
        <dbReference type="Rhea" id="RHEA:11632"/>
        <dbReference type="ChEBI" id="CHEBI:13193"/>
        <dbReference type="ChEBI" id="CHEBI:15378"/>
        <dbReference type="ChEBI" id="CHEBI:17499"/>
        <dbReference type="ChEBI" id="CHEBI:29317"/>
        <dbReference type="ChEBI" id="CHEBI:57843"/>
        <dbReference type="ChEBI" id="CHEBI:57972"/>
        <dbReference type="EC" id="4.4.1.16"/>
    </reaction>
</comment>
<comment type="cofactor">
    <cofactor evidence="1">
        <name>pyridoxal 5'-phosphate</name>
        <dbReference type="ChEBI" id="CHEBI:597326"/>
    </cofactor>
</comment>
<comment type="pathway">
    <text evidence="1">Cofactor biosynthesis; iron-sulfur cluster biosynthesis.</text>
</comment>
<comment type="subunit">
    <text evidence="1">Homodimer. Interacts with SufE and the SufBCD complex composed of SufB, SufC and SufD. The interaction with SufE is required to mediate the direct transfer of the sulfur atom from the S-sulfanylcysteine.</text>
</comment>
<comment type="subcellular location">
    <subcellularLocation>
        <location evidence="1">Cytoplasm</location>
    </subcellularLocation>
</comment>
<comment type="similarity">
    <text evidence="1">Belongs to the class-V pyridoxal-phosphate-dependent aminotransferase family. Csd subfamily.</text>
</comment>
<name>SUFS_ECO24</name>
<proteinExistence type="inferred from homology"/>
<evidence type="ECO:0000255" key="1">
    <source>
        <dbReference type="HAMAP-Rule" id="MF_01831"/>
    </source>
</evidence>
<accession>A7ZME5</accession>
<keyword id="KW-0963">Cytoplasm</keyword>
<keyword id="KW-0456">Lyase</keyword>
<keyword id="KW-0663">Pyridoxal phosphate</keyword>
<keyword id="KW-1185">Reference proteome</keyword>
<keyword id="KW-0808">Transferase</keyword>
<gene>
    <name evidence="1" type="primary">sufS</name>
    <name type="ordered locus">EcE24377A_1896</name>
</gene>
<organism>
    <name type="scientific">Escherichia coli O139:H28 (strain E24377A / ETEC)</name>
    <dbReference type="NCBI Taxonomy" id="331111"/>
    <lineage>
        <taxon>Bacteria</taxon>
        <taxon>Pseudomonadati</taxon>
        <taxon>Pseudomonadota</taxon>
        <taxon>Gammaproteobacteria</taxon>
        <taxon>Enterobacterales</taxon>
        <taxon>Enterobacteriaceae</taxon>
        <taxon>Escherichia</taxon>
    </lineage>
</organism>
<protein>
    <recommendedName>
        <fullName evidence="1">Cysteine desulfurase</fullName>
        <ecNumber evidence="1">2.8.1.7</ecNumber>
    </recommendedName>
    <alternativeName>
        <fullName evidence="1">Selenocysteine beta-lyase</fullName>
        <shortName evidence="1">SCL</shortName>
    </alternativeName>
    <alternativeName>
        <fullName evidence="1">Selenocysteine lyase</fullName>
        <ecNumber evidence="1">4.4.1.16</ecNumber>
    </alternativeName>
    <alternativeName>
        <fullName evidence="1">Selenocysteine reductase</fullName>
    </alternativeName>
</protein>